<sequence length="354" mass="39033">MTLLKNDTFLRALLKQPVEYTPIWMMRQAGRYLPEYKATRAKAGSFLDLCKNTELATEVTIQPLERFDLDAAILFSDILTVPDAMGLGLYFAEGEGPKFKRAMQHEADIAKLHVPDMEKLQYVFDAVTSIRKALDGRVPLIGFSGSPFTLACYMVEGGGSKEFRTIKTMMYSRPDLLHKILDTNAQAVTAYLNAQIDAGAQAVQIFDTWGGVLSDAAFKEFSLKYIRQIVAGLKRESEGRRVPVIVFAKGGGLWLESMAQIGADALGLDWTCNIGEARRRVGNQVALQGNFDPSALFGTPESIRAEVARILADYGHGSGHVFNLGHGINQHADPEHAKILVDTVHELSRQYHGG</sequence>
<name>DCUP_NEIMF</name>
<organism>
    <name type="scientific">Neisseria meningitidis serogroup C / serotype 2a (strain ATCC 700532 / DSM 15464 / FAM18)</name>
    <dbReference type="NCBI Taxonomy" id="272831"/>
    <lineage>
        <taxon>Bacteria</taxon>
        <taxon>Pseudomonadati</taxon>
        <taxon>Pseudomonadota</taxon>
        <taxon>Betaproteobacteria</taxon>
        <taxon>Neisseriales</taxon>
        <taxon>Neisseriaceae</taxon>
        <taxon>Neisseria</taxon>
    </lineage>
</organism>
<feature type="chain" id="PRO_1000023928" description="Uroporphyrinogen decarboxylase">
    <location>
        <begin position="1"/>
        <end position="354"/>
    </location>
</feature>
<feature type="binding site" evidence="1">
    <location>
        <begin position="27"/>
        <end position="31"/>
    </location>
    <ligand>
        <name>substrate</name>
    </ligand>
</feature>
<feature type="binding site" evidence="1">
    <location>
        <position position="77"/>
    </location>
    <ligand>
        <name>substrate</name>
    </ligand>
</feature>
<feature type="binding site" evidence="1">
    <location>
        <position position="153"/>
    </location>
    <ligand>
        <name>substrate</name>
    </ligand>
</feature>
<feature type="binding site" evidence="1">
    <location>
        <position position="208"/>
    </location>
    <ligand>
        <name>substrate</name>
    </ligand>
</feature>
<feature type="binding site" evidence="1">
    <location>
        <position position="326"/>
    </location>
    <ligand>
        <name>substrate</name>
    </ligand>
</feature>
<feature type="site" description="Transition state stabilizer" evidence="1">
    <location>
        <position position="77"/>
    </location>
</feature>
<evidence type="ECO:0000255" key="1">
    <source>
        <dbReference type="HAMAP-Rule" id="MF_00218"/>
    </source>
</evidence>
<proteinExistence type="inferred from homology"/>
<reference key="1">
    <citation type="journal article" date="2007" name="PLoS Genet.">
        <title>Meningococcal genetic variation mechanisms viewed through comparative analysis of serogroup C strain FAM18.</title>
        <authorList>
            <person name="Bentley S.D."/>
            <person name="Vernikos G.S."/>
            <person name="Snyder L.A.S."/>
            <person name="Churcher C."/>
            <person name="Arrowsmith C."/>
            <person name="Chillingworth T."/>
            <person name="Cronin A."/>
            <person name="Davis P.H."/>
            <person name="Holroyd N.E."/>
            <person name="Jagels K."/>
            <person name="Maddison M."/>
            <person name="Moule S."/>
            <person name="Rabbinowitsch E."/>
            <person name="Sharp S."/>
            <person name="Unwin L."/>
            <person name="Whitehead S."/>
            <person name="Quail M.A."/>
            <person name="Achtman M."/>
            <person name="Barrell B.G."/>
            <person name="Saunders N.J."/>
            <person name="Parkhill J."/>
        </authorList>
    </citation>
    <scope>NUCLEOTIDE SEQUENCE [LARGE SCALE GENOMIC DNA]</scope>
    <source>
        <strain>ATCC 700532 / DSM 15464 / FAM18</strain>
    </source>
</reference>
<gene>
    <name evidence="1" type="primary">hemE</name>
    <name type="ordered locus">NMC0733</name>
</gene>
<comment type="function">
    <text evidence="1">Catalyzes the decarboxylation of four acetate groups of uroporphyrinogen-III to yield coproporphyrinogen-III.</text>
</comment>
<comment type="catalytic activity">
    <reaction evidence="1">
        <text>uroporphyrinogen III + 4 H(+) = coproporphyrinogen III + 4 CO2</text>
        <dbReference type="Rhea" id="RHEA:19865"/>
        <dbReference type="ChEBI" id="CHEBI:15378"/>
        <dbReference type="ChEBI" id="CHEBI:16526"/>
        <dbReference type="ChEBI" id="CHEBI:57308"/>
        <dbReference type="ChEBI" id="CHEBI:57309"/>
        <dbReference type="EC" id="4.1.1.37"/>
    </reaction>
</comment>
<comment type="pathway">
    <text evidence="1">Porphyrin-containing compound metabolism; protoporphyrin-IX biosynthesis; coproporphyrinogen-III from 5-aminolevulinate: step 4/4.</text>
</comment>
<comment type="subunit">
    <text evidence="1">Homodimer.</text>
</comment>
<comment type="subcellular location">
    <subcellularLocation>
        <location evidence="1">Cytoplasm</location>
    </subcellularLocation>
</comment>
<comment type="similarity">
    <text evidence="1">Belongs to the uroporphyrinogen decarboxylase family.</text>
</comment>
<accession>A1KT40</accession>
<dbReference type="EC" id="4.1.1.37" evidence="1"/>
<dbReference type="EMBL" id="AM421808">
    <property type="protein sequence ID" value="CAM10022.1"/>
    <property type="molecule type" value="Genomic_DNA"/>
</dbReference>
<dbReference type="RefSeq" id="WP_002247805.1">
    <property type="nucleotide sequence ID" value="NC_008767.1"/>
</dbReference>
<dbReference type="SMR" id="A1KT40"/>
<dbReference type="KEGG" id="nmc:NMC0733"/>
<dbReference type="HOGENOM" id="CLU_040933_0_0_4"/>
<dbReference type="UniPathway" id="UPA00251">
    <property type="reaction ID" value="UER00321"/>
</dbReference>
<dbReference type="Proteomes" id="UP000002286">
    <property type="component" value="Chromosome"/>
</dbReference>
<dbReference type="GO" id="GO:0005829">
    <property type="term" value="C:cytosol"/>
    <property type="evidence" value="ECO:0007669"/>
    <property type="project" value="TreeGrafter"/>
</dbReference>
<dbReference type="GO" id="GO:0004853">
    <property type="term" value="F:uroporphyrinogen decarboxylase activity"/>
    <property type="evidence" value="ECO:0007669"/>
    <property type="project" value="UniProtKB-UniRule"/>
</dbReference>
<dbReference type="GO" id="GO:0019353">
    <property type="term" value="P:protoporphyrinogen IX biosynthetic process from glutamate"/>
    <property type="evidence" value="ECO:0007669"/>
    <property type="project" value="TreeGrafter"/>
</dbReference>
<dbReference type="CDD" id="cd00717">
    <property type="entry name" value="URO-D"/>
    <property type="match status" value="1"/>
</dbReference>
<dbReference type="FunFam" id="3.20.20.210:FF:000001">
    <property type="entry name" value="Uroporphyrinogen decarboxylase"/>
    <property type="match status" value="1"/>
</dbReference>
<dbReference type="Gene3D" id="3.20.20.210">
    <property type="match status" value="1"/>
</dbReference>
<dbReference type="HAMAP" id="MF_00218">
    <property type="entry name" value="URO_D"/>
    <property type="match status" value="1"/>
</dbReference>
<dbReference type="InterPro" id="IPR038071">
    <property type="entry name" value="UROD/MetE-like_sf"/>
</dbReference>
<dbReference type="InterPro" id="IPR006361">
    <property type="entry name" value="Uroporphyrinogen_deCO2ase_HemE"/>
</dbReference>
<dbReference type="InterPro" id="IPR000257">
    <property type="entry name" value="Uroporphyrinogen_deCOase"/>
</dbReference>
<dbReference type="NCBIfam" id="TIGR01464">
    <property type="entry name" value="hemE"/>
    <property type="match status" value="1"/>
</dbReference>
<dbReference type="PANTHER" id="PTHR21091">
    <property type="entry name" value="METHYLTETRAHYDROFOLATE:HOMOCYSTEINE METHYLTRANSFERASE RELATED"/>
    <property type="match status" value="1"/>
</dbReference>
<dbReference type="PANTHER" id="PTHR21091:SF169">
    <property type="entry name" value="UROPORPHYRINOGEN DECARBOXYLASE"/>
    <property type="match status" value="1"/>
</dbReference>
<dbReference type="Pfam" id="PF01208">
    <property type="entry name" value="URO-D"/>
    <property type="match status" value="1"/>
</dbReference>
<dbReference type="SUPFAM" id="SSF51726">
    <property type="entry name" value="UROD/MetE-like"/>
    <property type="match status" value="1"/>
</dbReference>
<dbReference type="PROSITE" id="PS00906">
    <property type="entry name" value="UROD_1"/>
    <property type="match status" value="1"/>
</dbReference>
<dbReference type="PROSITE" id="PS00907">
    <property type="entry name" value="UROD_2"/>
    <property type="match status" value="1"/>
</dbReference>
<protein>
    <recommendedName>
        <fullName evidence="1">Uroporphyrinogen decarboxylase</fullName>
        <shortName evidence="1">UPD</shortName>
        <shortName evidence="1">URO-D</shortName>
        <ecNumber evidence="1">4.1.1.37</ecNumber>
    </recommendedName>
</protein>
<keyword id="KW-0963">Cytoplasm</keyword>
<keyword id="KW-0210">Decarboxylase</keyword>
<keyword id="KW-0456">Lyase</keyword>
<keyword id="KW-0627">Porphyrin biosynthesis</keyword>